<accession>P9WQC3</accession>
<accession>L0T9P8</accession>
<accession>O53904</accession>
<accession>Q7D8B6</accession>
<comment type="catalytic activity">
    <reaction>
        <text>a primary alcohol + NAD(+) = an aldehyde + NADH + H(+)</text>
        <dbReference type="Rhea" id="RHEA:10736"/>
        <dbReference type="ChEBI" id="CHEBI:15378"/>
        <dbReference type="ChEBI" id="CHEBI:15734"/>
        <dbReference type="ChEBI" id="CHEBI:17478"/>
        <dbReference type="ChEBI" id="CHEBI:57540"/>
        <dbReference type="ChEBI" id="CHEBI:57945"/>
        <dbReference type="EC" id="1.1.1.1"/>
    </reaction>
</comment>
<comment type="catalytic activity">
    <reaction>
        <text>a secondary alcohol + NAD(+) = a ketone + NADH + H(+)</text>
        <dbReference type="Rhea" id="RHEA:10740"/>
        <dbReference type="ChEBI" id="CHEBI:15378"/>
        <dbReference type="ChEBI" id="CHEBI:17087"/>
        <dbReference type="ChEBI" id="CHEBI:35681"/>
        <dbReference type="ChEBI" id="CHEBI:57540"/>
        <dbReference type="ChEBI" id="CHEBI:57945"/>
        <dbReference type="EC" id="1.1.1.1"/>
    </reaction>
</comment>
<comment type="cofactor">
    <cofactor evidence="1">
        <name>Zn(2+)</name>
        <dbReference type="ChEBI" id="CHEBI:29105"/>
    </cofactor>
    <text evidence="1">Binds 2 Zn(2+) ions per subunit.</text>
</comment>
<comment type="miscellaneous">
    <text>Was identified as a high-confidence drug target.</text>
</comment>
<comment type="similarity">
    <text evidence="2">Belongs to the zinc-containing alcohol dehydrogenase family.</text>
</comment>
<sequence>MSDGAVVRALVLEAPRRLVVRQYRLPRIGDDDALVRVEACGLCGTDHEQYTGELAGGFAFVPGHETVGTIAAIGPRAEQRWGVSAGDRVAVEVFQSCRQCANCRGGEYRRCVRHGLADMYGFIPVDREPGLWGGYAEYQYLAPDSMVLRVAGDLSPEVATLFNPLGAGIRWGVTIPETKPGDVVAVLGPGIRGLCAAAAAKGAGAGFVMVTGLGPRDADRLALAAQFGADLAVDVAIDDPVAALTEQTGGLADVVVDVTAKAPAAFAQAIALARPAGTVVVAGTRGVGSGAPGFSPDVVVFKELRVLGALGVDATAYRAALDLLVSGRYPFASLPRRCVRLEGAEDLLATMAGERDGVPPIHGVLTP</sequence>
<dbReference type="EC" id="1.1.1.1"/>
<dbReference type="EMBL" id="AL123456">
    <property type="protein sequence ID" value="CCP44294.1"/>
    <property type="molecule type" value="Genomic_DNA"/>
</dbReference>
<dbReference type="PIR" id="C70820">
    <property type="entry name" value="C70820"/>
</dbReference>
<dbReference type="RefSeq" id="NP_216046.1">
    <property type="nucleotide sequence ID" value="NC_000962.3"/>
</dbReference>
<dbReference type="RefSeq" id="WP_003407690.1">
    <property type="nucleotide sequence ID" value="NZ_NVQJ01000004.1"/>
</dbReference>
<dbReference type="SMR" id="P9WQC3"/>
<dbReference type="FunCoup" id="P9WQC3">
    <property type="interactions" value="66"/>
</dbReference>
<dbReference type="STRING" id="83332.Rv1530"/>
<dbReference type="PaxDb" id="83332-Rv1530"/>
<dbReference type="DNASU" id="886426"/>
<dbReference type="GeneID" id="886426"/>
<dbReference type="KEGG" id="mtu:Rv1530"/>
<dbReference type="KEGG" id="mtv:RVBD_1530"/>
<dbReference type="TubercuList" id="Rv1530"/>
<dbReference type="eggNOG" id="COG1063">
    <property type="taxonomic scope" value="Bacteria"/>
</dbReference>
<dbReference type="InParanoid" id="P9WQC3"/>
<dbReference type="OrthoDB" id="9797931at2"/>
<dbReference type="PhylomeDB" id="P9WQC3"/>
<dbReference type="Proteomes" id="UP000001584">
    <property type="component" value="Chromosome"/>
</dbReference>
<dbReference type="GO" id="GO:0004022">
    <property type="term" value="F:alcohol dehydrogenase (NAD+) activity"/>
    <property type="evidence" value="ECO:0007669"/>
    <property type="project" value="UniProtKB-EC"/>
</dbReference>
<dbReference type="GO" id="GO:0008270">
    <property type="term" value="F:zinc ion binding"/>
    <property type="evidence" value="ECO:0007669"/>
    <property type="project" value="InterPro"/>
</dbReference>
<dbReference type="CDD" id="cd05188">
    <property type="entry name" value="MDR"/>
    <property type="match status" value="1"/>
</dbReference>
<dbReference type="Gene3D" id="3.90.180.10">
    <property type="entry name" value="Medium-chain alcohol dehydrogenases, catalytic domain"/>
    <property type="match status" value="1"/>
</dbReference>
<dbReference type="Gene3D" id="3.40.50.720">
    <property type="entry name" value="NAD(P)-binding Rossmann-like Domain"/>
    <property type="match status" value="1"/>
</dbReference>
<dbReference type="InterPro" id="IPR013149">
    <property type="entry name" value="ADH-like_C"/>
</dbReference>
<dbReference type="InterPro" id="IPR013154">
    <property type="entry name" value="ADH-like_N"/>
</dbReference>
<dbReference type="InterPro" id="IPR002328">
    <property type="entry name" value="ADH_Zn_CS"/>
</dbReference>
<dbReference type="InterPro" id="IPR011032">
    <property type="entry name" value="GroES-like_sf"/>
</dbReference>
<dbReference type="InterPro" id="IPR036291">
    <property type="entry name" value="NAD(P)-bd_dom_sf"/>
</dbReference>
<dbReference type="InterPro" id="IPR050129">
    <property type="entry name" value="Zn_alcohol_dh"/>
</dbReference>
<dbReference type="PANTHER" id="PTHR43401">
    <property type="entry name" value="L-THREONINE 3-DEHYDROGENASE"/>
    <property type="match status" value="1"/>
</dbReference>
<dbReference type="PANTHER" id="PTHR43401:SF2">
    <property type="entry name" value="L-THREONINE 3-DEHYDROGENASE"/>
    <property type="match status" value="1"/>
</dbReference>
<dbReference type="Pfam" id="PF08240">
    <property type="entry name" value="ADH_N"/>
    <property type="match status" value="1"/>
</dbReference>
<dbReference type="Pfam" id="PF00107">
    <property type="entry name" value="ADH_zinc_N"/>
    <property type="match status" value="1"/>
</dbReference>
<dbReference type="SUPFAM" id="SSF50129">
    <property type="entry name" value="GroES-like"/>
    <property type="match status" value="1"/>
</dbReference>
<dbReference type="SUPFAM" id="SSF51735">
    <property type="entry name" value="NAD(P)-binding Rossmann-fold domains"/>
    <property type="match status" value="1"/>
</dbReference>
<dbReference type="PROSITE" id="PS00059">
    <property type="entry name" value="ADH_ZINC"/>
    <property type="match status" value="1"/>
</dbReference>
<feature type="chain" id="PRO_0000391340" description="Probable alcohol dehydrogenase adh">
    <location>
        <begin position="1"/>
        <end position="367"/>
    </location>
</feature>
<feature type="binding site" evidence="1">
    <location>
        <position position="43"/>
    </location>
    <ligand>
        <name>Zn(2+)</name>
        <dbReference type="ChEBI" id="CHEBI:29105"/>
        <label>1</label>
        <note>catalytic</note>
    </ligand>
</feature>
<feature type="binding site" evidence="1">
    <location>
        <position position="64"/>
    </location>
    <ligand>
        <name>Zn(2+)</name>
        <dbReference type="ChEBI" id="CHEBI:29105"/>
        <label>1</label>
        <note>catalytic</note>
    </ligand>
</feature>
<feature type="binding site" evidence="1">
    <location>
        <position position="97"/>
    </location>
    <ligand>
        <name>Zn(2+)</name>
        <dbReference type="ChEBI" id="CHEBI:29105"/>
        <label>2</label>
    </ligand>
</feature>
<feature type="binding site" evidence="1">
    <location>
        <position position="100"/>
    </location>
    <ligand>
        <name>Zn(2+)</name>
        <dbReference type="ChEBI" id="CHEBI:29105"/>
        <label>2</label>
    </ligand>
</feature>
<feature type="binding site" evidence="1">
    <location>
        <position position="103"/>
    </location>
    <ligand>
        <name>Zn(2+)</name>
        <dbReference type="ChEBI" id="CHEBI:29105"/>
        <label>2</label>
    </ligand>
</feature>
<feature type="binding site" evidence="1">
    <location>
        <position position="111"/>
    </location>
    <ligand>
        <name>Zn(2+)</name>
        <dbReference type="ChEBI" id="CHEBI:29105"/>
        <label>2</label>
    </ligand>
</feature>
<feature type="binding site" evidence="1">
    <location>
        <position position="163"/>
    </location>
    <ligand>
        <name>Zn(2+)</name>
        <dbReference type="ChEBI" id="CHEBI:29105"/>
        <label>1</label>
        <note>catalytic</note>
    </ligand>
</feature>
<organism>
    <name type="scientific">Mycobacterium tuberculosis (strain ATCC 25618 / H37Rv)</name>
    <dbReference type="NCBI Taxonomy" id="83332"/>
    <lineage>
        <taxon>Bacteria</taxon>
        <taxon>Bacillati</taxon>
        <taxon>Actinomycetota</taxon>
        <taxon>Actinomycetes</taxon>
        <taxon>Mycobacteriales</taxon>
        <taxon>Mycobacteriaceae</taxon>
        <taxon>Mycobacterium</taxon>
        <taxon>Mycobacterium tuberculosis complex</taxon>
    </lineage>
</organism>
<name>ADH_MYCTU</name>
<gene>
    <name type="primary">adh</name>
    <name type="ordered locus">Rv1530</name>
</gene>
<keyword id="KW-0479">Metal-binding</keyword>
<keyword id="KW-0520">NAD</keyword>
<keyword id="KW-0560">Oxidoreductase</keyword>
<keyword id="KW-1185">Reference proteome</keyword>
<keyword id="KW-0862">Zinc</keyword>
<evidence type="ECO:0000250" key="1"/>
<evidence type="ECO:0000305" key="2"/>
<protein>
    <recommendedName>
        <fullName>Probable alcohol dehydrogenase adh</fullName>
        <ecNumber>1.1.1.1</ecNumber>
    </recommendedName>
</protein>
<proteinExistence type="evidence at protein level"/>
<reference key="1">
    <citation type="journal article" date="1998" name="Nature">
        <title>Deciphering the biology of Mycobacterium tuberculosis from the complete genome sequence.</title>
        <authorList>
            <person name="Cole S.T."/>
            <person name="Brosch R."/>
            <person name="Parkhill J."/>
            <person name="Garnier T."/>
            <person name="Churcher C.M."/>
            <person name="Harris D.E."/>
            <person name="Gordon S.V."/>
            <person name="Eiglmeier K."/>
            <person name="Gas S."/>
            <person name="Barry C.E. III"/>
            <person name="Tekaia F."/>
            <person name="Badcock K."/>
            <person name="Basham D."/>
            <person name="Brown D."/>
            <person name="Chillingworth T."/>
            <person name="Connor R."/>
            <person name="Davies R.M."/>
            <person name="Devlin K."/>
            <person name="Feltwell T."/>
            <person name="Gentles S."/>
            <person name="Hamlin N."/>
            <person name="Holroyd S."/>
            <person name="Hornsby T."/>
            <person name="Jagels K."/>
            <person name="Krogh A."/>
            <person name="McLean J."/>
            <person name="Moule S."/>
            <person name="Murphy L.D."/>
            <person name="Oliver S."/>
            <person name="Osborne J."/>
            <person name="Quail M.A."/>
            <person name="Rajandream M.A."/>
            <person name="Rogers J."/>
            <person name="Rutter S."/>
            <person name="Seeger K."/>
            <person name="Skelton S."/>
            <person name="Squares S."/>
            <person name="Squares R."/>
            <person name="Sulston J.E."/>
            <person name="Taylor K."/>
            <person name="Whitehead S."/>
            <person name="Barrell B.G."/>
        </authorList>
    </citation>
    <scope>NUCLEOTIDE SEQUENCE [LARGE SCALE GENOMIC DNA]</scope>
    <source>
        <strain>ATCC 25618 / H37Rv</strain>
    </source>
</reference>
<reference key="2">
    <citation type="journal article" date="2008" name="BMC Syst. Biol.">
        <title>targetTB: a target identification pipeline for Mycobacterium tuberculosis through an interactome, reactome and genome-scale structural analysis.</title>
        <authorList>
            <person name="Raman K."/>
            <person name="Yeturu K."/>
            <person name="Chandra N."/>
        </authorList>
    </citation>
    <scope>IDENTIFICATION AS A DRUG TARGET [LARGE SCALE ANALYSIS]</scope>
</reference>
<reference key="3">
    <citation type="journal article" date="2011" name="Mol. Cell. Proteomics">
        <title>Proteogenomic analysis of Mycobacterium tuberculosis by high resolution mass spectrometry.</title>
        <authorList>
            <person name="Kelkar D.S."/>
            <person name="Kumar D."/>
            <person name="Kumar P."/>
            <person name="Balakrishnan L."/>
            <person name="Muthusamy B."/>
            <person name="Yadav A.K."/>
            <person name="Shrivastava P."/>
            <person name="Marimuthu A."/>
            <person name="Anand S."/>
            <person name="Sundaram H."/>
            <person name="Kingsbury R."/>
            <person name="Harsha H.C."/>
            <person name="Nair B."/>
            <person name="Prasad T.S."/>
            <person name="Chauhan D.S."/>
            <person name="Katoch K."/>
            <person name="Katoch V.M."/>
            <person name="Kumar P."/>
            <person name="Chaerkady R."/>
            <person name="Ramachandran S."/>
            <person name="Dash D."/>
            <person name="Pandey A."/>
        </authorList>
    </citation>
    <scope>IDENTIFICATION BY MASS SPECTROMETRY [LARGE SCALE ANALYSIS]</scope>
    <source>
        <strain>ATCC 25618 / H37Rv</strain>
    </source>
</reference>